<gene>
    <name type="ORF">pc3</name>
</gene>
<keyword id="KW-0167">Capsid protein</keyword>
<keyword id="KW-0903">Direct protein sequencing</keyword>
<keyword id="KW-1139">Helical capsid protein</keyword>
<keyword id="KW-1035">Host cytoplasm</keyword>
<keyword id="KW-0694">RNA-binding</keyword>
<keyword id="KW-0543">Viral nucleoprotein</keyword>
<keyword id="KW-0946">Virion</keyword>
<organismHost>
    <name type="scientific">Avena sativa</name>
    <name type="common">Oat</name>
    <dbReference type="NCBI Taxonomy" id="4498"/>
</organismHost>
<organismHost>
    <name type="scientific">Digitaria</name>
    <dbReference type="NCBI Taxonomy" id="66017"/>
</organismHost>
<organismHost>
    <name type="scientific">Eragrostis</name>
    <dbReference type="NCBI Taxonomy" id="38413"/>
</organismHost>
<organismHost>
    <name type="scientific">Hordeum vulgare</name>
    <name type="common">Barley</name>
    <dbReference type="NCBI Taxonomy" id="4513"/>
</organismHost>
<organismHost>
    <name type="scientific">Oryza sativa</name>
    <name type="common">Rice</name>
    <dbReference type="NCBI Taxonomy" id="4530"/>
</organismHost>
<organismHost>
    <name type="scientific">Setaria italica</name>
    <name type="common">Foxtail millet</name>
    <name type="synonym">Panicum italicum</name>
    <dbReference type="NCBI Taxonomy" id="4555"/>
</organismHost>
<organismHost>
    <name type="scientific">Setaria viridis</name>
    <name type="common">Green bristlegrass</name>
    <name type="synonym">Setaria italica subsp. viridis</name>
    <dbReference type="NCBI Taxonomy" id="4556"/>
</organismHost>
<organismHost>
    <name type="scientific">Triticum aestivum</name>
    <name type="common">Wheat</name>
    <dbReference type="NCBI Taxonomy" id="4565"/>
</organismHost>
<organismHost>
    <name type="scientific">Zea mays</name>
    <name type="common">Maize</name>
    <dbReference type="NCBI Taxonomy" id="4577"/>
</organismHost>
<organism>
    <name type="scientific">Rice stripe virus (isolate M)</name>
    <name type="common">RSV</name>
    <dbReference type="NCBI Taxonomy" id="36393"/>
    <lineage>
        <taxon>Viruses</taxon>
        <taxon>Riboviria</taxon>
        <taxon>Orthornavirae</taxon>
        <taxon>Negarnaviricota</taxon>
        <taxon>Polyploviricotina</taxon>
        <taxon>Ellioviricetes</taxon>
        <taxon>Bunyavirales</taxon>
        <taxon>Phenuiviridae</taxon>
        <taxon>Tenuivirus</taxon>
        <taxon>Tenuivirus oryzaclavatae</taxon>
    </lineage>
</organism>
<sequence length="322" mass="35134">MGTNKPATLADLQKAINDISKDALSYLTAHKADVVTFAGQIEYAGYDAATLIGILKDKGGDTLAKDMTMCITMRYVRGTGFVRDVTKKVKVAAGSTEASTLVSRYGIVSSVGTNANAITLGRLAQLFPNVSHEVVRQISGVKMAVDSSDLGLTGCDNLLWDYVPQYIKLESETAPYCSTHSLSHILFVVHIIHSFQITKKTMPEGKKKERGLTKDIDMMKYTTGLLVITCKSKNLSDKKKEEGRKKVLDEFITNGKVKTTIFDALAGMSVNTISTYGNQTRLYLAQQSKLMKILAENTSKTATEVSGLVKEFFEDEAEGADD</sequence>
<proteinExistence type="evidence at protein level"/>
<evidence type="ECO:0000250" key="1"/>
<evidence type="ECO:0000250" key="2">
    <source>
        <dbReference type="UniProtKB" id="P21701"/>
    </source>
</evidence>
<evidence type="ECO:0000305" key="3"/>
<dbReference type="EMBL" id="D01094">
    <property type="protein sequence ID" value="BAA00879.1"/>
    <property type="molecule type" value="Genomic_RNA"/>
</dbReference>
<dbReference type="SMR" id="P68560"/>
<dbReference type="KEGG" id="vg:962687"/>
<dbReference type="GO" id="GO:0019029">
    <property type="term" value="C:helical viral capsid"/>
    <property type="evidence" value="ECO:0007669"/>
    <property type="project" value="UniProtKB-KW"/>
</dbReference>
<dbReference type="GO" id="GO:0030430">
    <property type="term" value="C:host cell cytoplasm"/>
    <property type="evidence" value="ECO:0007669"/>
    <property type="project" value="UniProtKB-SubCell"/>
</dbReference>
<dbReference type="GO" id="GO:0019013">
    <property type="term" value="C:viral nucleocapsid"/>
    <property type="evidence" value="ECO:0007669"/>
    <property type="project" value="UniProtKB-KW"/>
</dbReference>
<dbReference type="GO" id="GO:0003723">
    <property type="term" value="F:RNA binding"/>
    <property type="evidence" value="ECO:0007669"/>
    <property type="project" value="UniProtKB-KW"/>
</dbReference>
<dbReference type="InterPro" id="IPR009522">
    <property type="entry name" value="Capsid_Phlebovir/Tenuivir"/>
</dbReference>
<dbReference type="InterPro" id="IPR008864">
    <property type="entry name" value="Nucleocapsid_Tenuivirus"/>
</dbReference>
<dbReference type="Pfam" id="PF05733">
    <property type="entry name" value="Tenui_N"/>
    <property type="match status" value="1"/>
</dbReference>
<dbReference type="PIRSF" id="PIRSF004108">
    <property type="entry name" value="Tenuivirus_N"/>
    <property type="match status" value="1"/>
</dbReference>
<protein>
    <recommendedName>
        <fullName>Nucleoprotein</fullName>
    </recommendedName>
    <alternativeName>
        <fullName>Coat protein</fullName>
        <shortName>CP</shortName>
    </alternativeName>
    <alternativeName>
        <fullName>Nucleocapsid protein</fullName>
        <shortName>Protein N</shortName>
    </alternativeName>
    <alternativeName>
        <fullName>Protein pc3</fullName>
    </alternativeName>
</protein>
<reference key="1">
    <citation type="journal article" date="1991" name="J. Gen. Virol.">
        <title>Ambisense segment 3 of rice stripe virus: the first instance of a virus containing two ambisense segments.</title>
        <authorList>
            <person name="Kakutani T."/>
            <person name="Hayano Y."/>
            <person name="Hayashi T."/>
            <person name="Minobe Y."/>
        </authorList>
    </citation>
    <scope>NUCLEOTIDE SEQUENCE [GENOMIC RNA]</scope>
</reference>
<reference key="2">
    <citation type="journal article" date="1990" name="Virology">
        <title>Coding strategy of rice stripe virus: major nonstructural protein is encoded in viral RNA segment 4 and coat protein in RNA complementary to segment 3.</title>
        <authorList>
            <person name="Hayano Y."/>
            <person name="Kakutani T."/>
            <person name="Hayashi T."/>
            <person name="Minobe Y."/>
        </authorList>
    </citation>
    <scope>PROTEIN SEQUENCE OF 311-316</scope>
</reference>
<feature type="chain" id="PRO_0000222521" description="Nucleoprotein">
    <location>
        <begin position="1"/>
        <end position="322"/>
    </location>
</feature>
<feature type="binding site" evidence="2">
    <location>
        <position position="43"/>
    </location>
    <ligand>
        <name>RNA</name>
        <dbReference type="ChEBI" id="CHEBI:33697"/>
    </ligand>
</feature>
<feature type="binding site" evidence="2">
    <location>
        <position position="46"/>
    </location>
    <ligand>
        <name>RNA</name>
        <dbReference type="ChEBI" id="CHEBI:33697"/>
    </ligand>
</feature>
<feature type="binding site" evidence="2">
    <location>
        <position position="76"/>
    </location>
    <ligand>
        <name>RNA</name>
        <dbReference type="ChEBI" id="CHEBI:33697"/>
    </ligand>
</feature>
<feature type="binding site" evidence="2">
    <location>
        <position position="122"/>
    </location>
    <ligand>
        <name>RNA</name>
        <dbReference type="ChEBI" id="CHEBI:33697"/>
    </ligand>
</feature>
<feature type="binding site" evidence="2">
    <location>
        <position position="240"/>
    </location>
    <ligand>
        <name>RNA</name>
        <dbReference type="ChEBI" id="CHEBI:33697"/>
    </ligand>
</feature>
<feature type="binding site" evidence="2">
    <location>
        <position position="269"/>
    </location>
    <ligand>
        <name>RNA</name>
        <dbReference type="ChEBI" id="CHEBI:33697"/>
    </ligand>
</feature>
<name>NCAP_RSVM</name>
<comment type="function">
    <text evidence="1">Encapsidates the genome, protecting it from nucleases. The encapsidated genomic RNA is termed the nucleocapsid (NC), and serves as template for viral transcription and replication (By similarity).</text>
</comment>
<comment type="subcellular location">
    <subcellularLocation>
        <location>Virion</location>
    </subcellularLocation>
    <subcellularLocation>
        <location evidence="1">Host cytoplasm</location>
    </subcellularLocation>
</comment>
<comment type="domain">
    <text evidence="2">The N-terminus is involved in homooligomerization.</text>
</comment>
<comment type="similarity">
    <text evidence="3">Belongs to the tenuiviruses nucleocapsid protein family.</text>
</comment>
<accession>P68560</accession>
<accession>P26657</accession>